<accession>Q681Z2</accession>
<accession>Q9M8S1</accession>
<evidence type="ECO:0000250" key="1">
    <source>
        <dbReference type="UniProtKB" id="P53965"/>
    </source>
</evidence>
<evidence type="ECO:0000250" key="2">
    <source>
        <dbReference type="UniProtKB" id="Q9ZVN4"/>
    </source>
</evidence>
<evidence type="ECO:0000255" key="3">
    <source>
        <dbReference type="PROSITE-ProRule" id="PRU00160"/>
    </source>
</evidence>
<evidence type="ECO:0000269" key="4">
    <source>
    </source>
</evidence>
<evidence type="ECO:0000269" key="5">
    <source>
    </source>
</evidence>
<evidence type="ECO:0000269" key="6">
    <source>
    </source>
</evidence>
<evidence type="ECO:0000269" key="7">
    <source>
    </source>
</evidence>
<evidence type="ECO:0000303" key="8">
    <source>
    </source>
</evidence>
<evidence type="ECO:0000305" key="9"/>
<evidence type="ECO:0000312" key="10">
    <source>
        <dbReference type="Araport" id="AT3G02800"/>
    </source>
</evidence>
<evidence type="ECO:0000312" key="11">
    <source>
        <dbReference type="EMBL" id="AAF26980.1"/>
    </source>
</evidence>
<dbReference type="EC" id="3.6.1.52" evidence="7"/>
<dbReference type="EMBL" id="AC018363">
    <property type="protein sequence ID" value="AAF26980.1"/>
    <property type="status" value="ALT_INIT"/>
    <property type="molecule type" value="Genomic_DNA"/>
</dbReference>
<dbReference type="EMBL" id="CP002686">
    <property type="protein sequence ID" value="AEE73861.1"/>
    <property type="molecule type" value="Genomic_DNA"/>
</dbReference>
<dbReference type="EMBL" id="AK175475">
    <property type="protein sequence ID" value="BAD43238.1"/>
    <property type="molecule type" value="mRNA"/>
</dbReference>
<dbReference type="EMBL" id="BT010502">
    <property type="protein sequence ID" value="AAQ65125.1"/>
    <property type="molecule type" value="mRNA"/>
</dbReference>
<dbReference type="RefSeq" id="NP_186929.2">
    <property type="nucleotide sequence ID" value="NM_111148.3"/>
</dbReference>
<dbReference type="SMR" id="Q681Z2"/>
<dbReference type="FunCoup" id="Q681Z2">
    <property type="interactions" value="12"/>
</dbReference>
<dbReference type="STRING" id="3702.Q681Z2"/>
<dbReference type="PaxDb" id="3702-AT3G02800.1"/>
<dbReference type="EnsemblPlants" id="AT3G02800.1">
    <property type="protein sequence ID" value="AT3G02800.1"/>
    <property type="gene ID" value="AT3G02800"/>
</dbReference>
<dbReference type="GeneID" id="821239"/>
<dbReference type="Gramene" id="AT3G02800.1">
    <property type="protein sequence ID" value="AT3G02800.1"/>
    <property type="gene ID" value="AT3G02800"/>
</dbReference>
<dbReference type="KEGG" id="ath:AT3G02800"/>
<dbReference type="Araport" id="AT3G02800"/>
<dbReference type="TAIR" id="AT3G02800">
    <property type="gene designation" value="PFA-DSP3"/>
</dbReference>
<dbReference type="eggNOG" id="KOG1572">
    <property type="taxonomic scope" value="Eukaryota"/>
</dbReference>
<dbReference type="HOGENOM" id="CLU_047845_5_1_1"/>
<dbReference type="InParanoid" id="Q681Z2"/>
<dbReference type="OMA" id="EYPEQNM"/>
<dbReference type="PhylomeDB" id="Q681Z2"/>
<dbReference type="PRO" id="PR:Q681Z2"/>
<dbReference type="Proteomes" id="UP000006548">
    <property type="component" value="Chromosome 3"/>
</dbReference>
<dbReference type="ExpressionAtlas" id="Q681Z2">
    <property type="expression patterns" value="baseline and differential"/>
</dbReference>
<dbReference type="GO" id="GO:0005737">
    <property type="term" value="C:cytoplasm"/>
    <property type="evidence" value="ECO:0000314"/>
    <property type="project" value="TAIR"/>
</dbReference>
<dbReference type="GO" id="GO:0005634">
    <property type="term" value="C:nucleus"/>
    <property type="evidence" value="ECO:0000314"/>
    <property type="project" value="UniProtKB"/>
</dbReference>
<dbReference type="GO" id="GO:0052847">
    <property type="term" value="F:inositol-1,5-bisdiphosphate-2,3,4,6-tetrakisphosphate 5-diphosphatase activity"/>
    <property type="evidence" value="ECO:0000314"/>
    <property type="project" value="UniProtKB"/>
</dbReference>
<dbReference type="GO" id="GO:0052848">
    <property type="term" value="F:inositol-3,5-bisdiphosphate-2,3,4,6-tetrakisphosphate 5-diphosphatase activity"/>
    <property type="evidence" value="ECO:0007669"/>
    <property type="project" value="RHEA"/>
</dbReference>
<dbReference type="GO" id="GO:0052845">
    <property type="term" value="F:inositol-5-diphosphate-1,2,3,4,6-pentakisphosphate diphosphatase activity"/>
    <property type="evidence" value="ECO:0000314"/>
    <property type="project" value="UniProtKB"/>
</dbReference>
<dbReference type="GO" id="GO:0016791">
    <property type="term" value="F:phosphatase activity"/>
    <property type="evidence" value="ECO:0000314"/>
    <property type="project" value="TAIR"/>
</dbReference>
<dbReference type="GO" id="GO:0004725">
    <property type="term" value="F:protein tyrosine phosphatase activity"/>
    <property type="evidence" value="ECO:0007669"/>
    <property type="project" value="UniProtKB-EC"/>
</dbReference>
<dbReference type="CDD" id="cd14528">
    <property type="entry name" value="PFA-DSP_Siw14"/>
    <property type="match status" value="1"/>
</dbReference>
<dbReference type="FunFam" id="3.90.190.10:FF:000024">
    <property type="entry name" value="probable tyrosine-protein phosphatase At1g05000"/>
    <property type="match status" value="1"/>
</dbReference>
<dbReference type="Gene3D" id="3.90.190.10">
    <property type="entry name" value="Protein tyrosine phosphatase superfamily"/>
    <property type="match status" value="1"/>
</dbReference>
<dbReference type="InterPro" id="IPR020428">
    <property type="entry name" value="PFA-DSPs"/>
</dbReference>
<dbReference type="InterPro" id="IPR029021">
    <property type="entry name" value="Prot-tyrosine_phosphatase-like"/>
</dbReference>
<dbReference type="InterPro" id="IPR004861">
    <property type="entry name" value="Siw14-like"/>
</dbReference>
<dbReference type="InterPro" id="IPR016130">
    <property type="entry name" value="Tyr_Pase_AS"/>
</dbReference>
<dbReference type="InterPro" id="IPR020422">
    <property type="entry name" value="TYR_PHOSPHATASE_DUAL_dom"/>
</dbReference>
<dbReference type="PANTHER" id="PTHR31126">
    <property type="entry name" value="TYROSINE-PROTEIN PHOSPHATASE"/>
    <property type="match status" value="1"/>
</dbReference>
<dbReference type="PANTHER" id="PTHR31126:SF43">
    <property type="entry name" value="TYROSINE-PROTEIN PHOSPHATASE DSP3"/>
    <property type="match status" value="1"/>
</dbReference>
<dbReference type="Pfam" id="PF03162">
    <property type="entry name" value="Y_phosphatase2"/>
    <property type="match status" value="1"/>
</dbReference>
<dbReference type="PRINTS" id="PR01911">
    <property type="entry name" value="PFDSPHPHTASE"/>
</dbReference>
<dbReference type="SUPFAM" id="SSF52799">
    <property type="entry name" value="(Phosphotyrosine protein) phosphatases II"/>
    <property type="match status" value="1"/>
</dbReference>
<dbReference type="PROSITE" id="PS00383">
    <property type="entry name" value="TYR_PHOSPHATASE_1"/>
    <property type="match status" value="1"/>
</dbReference>
<dbReference type="PROSITE" id="PS50054">
    <property type="entry name" value="TYR_PHOSPHATASE_DUAL"/>
    <property type="match status" value="1"/>
</dbReference>
<protein>
    <recommendedName>
        <fullName evidence="9">Inositol diphosphatase DSP3</fullName>
        <ecNumber evidence="7">3.6.1.52</ecNumber>
    </recommendedName>
    <alternativeName>
        <fullName evidence="9">Inositol pyrophosphate phosphatase DSP3</fullName>
    </alternativeName>
    <alternativeName>
        <fullName evidence="8">Protein PLANT AND FUNGI ATYPICAL DUAL-SPECIFICITY PHOSPHATASE 3</fullName>
        <shortName evidence="8">AtPFA-DSP3</shortName>
    </alternativeName>
</protein>
<gene>
    <name evidence="9" type="primary">DSP3</name>
    <name evidence="10" type="ordered locus">At3g02800</name>
    <name evidence="11" type="ORF">F13E7.26</name>
</gene>
<name>DSP3_ARATH</name>
<feature type="chain" id="PRO_0000442993" description="Inositol diphosphatase DSP3">
    <location>
        <begin position="1"/>
        <end position="203"/>
    </location>
</feature>
<feature type="domain" description="Tyrosine-protein phosphatase" evidence="3">
    <location>
        <begin position="20"/>
        <end position="169"/>
    </location>
</feature>
<feature type="region of interest" description="WPD loop important for active site topology" evidence="2">
    <location>
        <begin position="76"/>
        <end position="88"/>
    </location>
</feature>
<feature type="active site" description="Phosphocysteine intermediate" evidence="3">
    <location>
        <position position="112"/>
    </location>
</feature>
<feature type="site" description="Transition state stabilizer" evidence="1">
    <location>
        <position position="118"/>
    </location>
</feature>
<reference key="1">
    <citation type="journal article" date="2000" name="Nature">
        <title>Sequence and analysis of chromosome 3 of the plant Arabidopsis thaliana.</title>
        <authorList>
            <person name="Salanoubat M."/>
            <person name="Lemcke K."/>
            <person name="Rieger M."/>
            <person name="Ansorge W."/>
            <person name="Unseld M."/>
            <person name="Fartmann B."/>
            <person name="Valle G."/>
            <person name="Bloecker H."/>
            <person name="Perez-Alonso M."/>
            <person name="Obermaier B."/>
            <person name="Delseny M."/>
            <person name="Boutry M."/>
            <person name="Grivell L.A."/>
            <person name="Mache R."/>
            <person name="Puigdomenech P."/>
            <person name="De Simone V."/>
            <person name="Choisne N."/>
            <person name="Artiguenave F."/>
            <person name="Robert C."/>
            <person name="Brottier P."/>
            <person name="Wincker P."/>
            <person name="Cattolico L."/>
            <person name="Weissenbach J."/>
            <person name="Saurin W."/>
            <person name="Quetier F."/>
            <person name="Schaefer M."/>
            <person name="Mueller-Auer S."/>
            <person name="Gabel C."/>
            <person name="Fuchs M."/>
            <person name="Benes V."/>
            <person name="Wurmbach E."/>
            <person name="Drzonek H."/>
            <person name="Erfle H."/>
            <person name="Jordan N."/>
            <person name="Bangert S."/>
            <person name="Wiedelmann R."/>
            <person name="Kranz H."/>
            <person name="Voss H."/>
            <person name="Holland R."/>
            <person name="Brandt P."/>
            <person name="Nyakatura G."/>
            <person name="Vezzi A."/>
            <person name="D'Angelo M."/>
            <person name="Pallavicini A."/>
            <person name="Toppo S."/>
            <person name="Simionati B."/>
            <person name="Conrad A."/>
            <person name="Hornischer K."/>
            <person name="Kauer G."/>
            <person name="Loehnert T.-H."/>
            <person name="Nordsiek G."/>
            <person name="Reichelt J."/>
            <person name="Scharfe M."/>
            <person name="Schoen O."/>
            <person name="Bargues M."/>
            <person name="Terol J."/>
            <person name="Climent J."/>
            <person name="Navarro P."/>
            <person name="Collado C."/>
            <person name="Perez-Perez A."/>
            <person name="Ottenwaelder B."/>
            <person name="Duchemin D."/>
            <person name="Cooke R."/>
            <person name="Laudie M."/>
            <person name="Berger-Llauro C."/>
            <person name="Purnelle B."/>
            <person name="Masuy D."/>
            <person name="de Haan M."/>
            <person name="Maarse A.C."/>
            <person name="Alcaraz J.-P."/>
            <person name="Cottet A."/>
            <person name="Casacuberta E."/>
            <person name="Monfort A."/>
            <person name="Argiriou A."/>
            <person name="Flores M."/>
            <person name="Liguori R."/>
            <person name="Vitale D."/>
            <person name="Mannhaupt G."/>
            <person name="Haase D."/>
            <person name="Schoof H."/>
            <person name="Rudd S."/>
            <person name="Zaccaria P."/>
            <person name="Mewes H.-W."/>
            <person name="Mayer K.F.X."/>
            <person name="Kaul S."/>
            <person name="Town C.D."/>
            <person name="Koo H.L."/>
            <person name="Tallon L.J."/>
            <person name="Jenkins J."/>
            <person name="Rooney T."/>
            <person name="Rizzo M."/>
            <person name="Walts A."/>
            <person name="Utterback T."/>
            <person name="Fujii C.Y."/>
            <person name="Shea T.P."/>
            <person name="Creasy T.H."/>
            <person name="Haas B."/>
            <person name="Maiti R."/>
            <person name="Wu D."/>
            <person name="Peterson J."/>
            <person name="Van Aken S."/>
            <person name="Pai G."/>
            <person name="Militscher J."/>
            <person name="Sellers P."/>
            <person name="Gill J.E."/>
            <person name="Feldblyum T.V."/>
            <person name="Preuss D."/>
            <person name="Lin X."/>
            <person name="Nierman W.C."/>
            <person name="Salzberg S.L."/>
            <person name="White O."/>
            <person name="Venter J.C."/>
            <person name="Fraser C.M."/>
            <person name="Kaneko T."/>
            <person name="Nakamura Y."/>
            <person name="Sato S."/>
            <person name="Kato T."/>
            <person name="Asamizu E."/>
            <person name="Sasamoto S."/>
            <person name="Kimura T."/>
            <person name="Idesawa K."/>
            <person name="Kawashima K."/>
            <person name="Kishida Y."/>
            <person name="Kiyokawa C."/>
            <person name="Kohara M."/>
            <person name="Matsumoto M."/>
            <person name="Matsuno A."/>
            <person name="Muraki A."/>
            <person name="Nakayama S."/>
            <person name="Nakazaki N."/>
            <person name="Shinpo S."/>
            <person name="Takeuchi C."/>
            <person name="Wada T."/>
            <person name="Watanabe A."/>
            <person name="Yamada M."/>
            <person name="Yasuda M."/>
            <person name="Tabata S."/>
        </authorList>
    </citation>
    <scope>NUCLEOTIDE SEQUENCE [LARGE SCALE GENOMIC DNA]</scope>
    <source>
        <strain>cv. Columbia</strain>
    </source>
</reference>
<reference key="2">
    <citation type="journal article" date="2017" name="Plant J.">
        <title>Araport11: a complete reannotation of the Arabidopsis thaliana reference genome.</title>
        <authorList>
            <person name="Cheng C.Y."/>
            <person name="Krishnakumar V."/>
            <person name="Chan A.P."/>
            <person name="Thibaud-Nissen F."/>
            <person name="Schobel S."/>
            <person name="Town C.D."/>
        </authorList>
    </citation>
    <scope>GENOME REANNOTATION</scope>
    <source>
        <strain>cv. Columbia</strain>
    </source>
</reference>
<reference key="3">
    <citation type="submission" date="2004-09" db="EMBL/GenBank/DDBJ databases">
        <title>Large-scale analysis of RIKEN Arabidopsis full-length (RAFL) cDNAs.</title>
        <authorList>
            <person name="Totoki Y."/>
            <person name="Seki M."/>
            <person name="Ishida J."/>
            <person name="Nakajima M."/>
            <person name="Enju A."/>
            <person name="Kamiya A."/>
            <person name="Narusaka M."/>
            <person name="Shin-i T."/>
            <person name="Nakagawa M."/>
            <person name="Sakamoto N."/>
            <person name="Oishi K."/>
            <person name="Kohara Y."/>
            <person name="Kobayashi M."/>
            <person name="Toyoda A."/>
            <person name="Sakaki Y."/>
            <person name="Sakurai T."/>
            <person name="Iida K."/>
            <person name="Akiyama K."/>
            <person name="Satou M."/>
            <person name="Toyoda T."/>
            <person name="Konagaya A."/>
            <person name="Carninci P."/>
            <person name="Kawai J."/>
            <person name="Hayashizaki Y."/>
            <person name="Shinozaki K."/>
        </authorList>
    </citation>
    <scope>NUCLEOTIDE SEQUENCE [LARGE SCALE MRNA]</scope>
    <source>
        <strain>cv. Columbia</strain>
    </source>
</reference>
<reference key="4">
    <citation type="journal article" date="2003" name="Science">
        <title>Empirical analysis of transcriptional activity in the Arabidopsis genome.</title>
        <authorList>
            <person name="Yamada K."/>
            <person name="Lim J."/>
            <person name="Dale J.M."/>
            <person name="Chen H."/>
            <person name="Shinn P."/>
            <person name="Palm C.J."/>
            <person name="Southwick A.M."/>
            <person name="Wu H.C."/>
            <person name="Kim C.J."/>
            <person name="Nguyen M."/>
            <person name="Pham P.K."/>
            <person name="Cheuk R.F."/>
            <person name="Karlin-Newmann G."/>
            <person name="Liu S.X."/>
            <person name="Lam B."/>
            <person name="Sakano H."/>
            <person name="Wu T."/>
            <person name="Yu G."/>
            <person name="Miranda M."/>
            <person name="Quach H.L."/>
            <person name="Tripp M."/>
            <person name="Chang C.H."/>
            <person name="Lee J.M."/>
            <person name="Toriumi M.J."/>
            <person name="Chan M.M."/>
            <person name="Tang C.C."/>
            <person name="Onodera C.S."/>
            <person name="Deng J.M."/>
            <person name="Akiyama K."/>
            <person name="Ansari Y."/>
            <person name="Arakawa T."/>
            <person name="Banh J."/>
            <person name="Banno F."/>
            <person name="Bowser L."/>
            <person name="Brooks S.Y."/>
            <person name="Carninci P."/>
            <person name="Chao Q."/>
            <person name="Choy N."/>
            <person name="Enju A."/>
            <person name="Goldsmith A.D."/>
            <person name="Gurjal M."/>
            <person name="Hansen N.F."/>
            <person name="Hayashizaki Y."/>
            <person name="Johnson-Hopson C."/>
            <person name="Hsuan V.W."/>
            <person name="Iida K."/>
            <person name="Karnes M."/>
            <person name="Khan S."/>
            <person name="Koesema E."/>
            <person name="Ishida J."/>
            <person name="Jiang P.X."/>
            <person name="Jones T."/>
            <person name="Kawai J."/>
            <person name="Kamiya A."/>
            <person name="Meyers C."/>
            <person name="Nakajima M."/>
            <person name="Narusaka M."/>
            <person name="Seki M."/>
            <person name="Sakurai T."/>
            <person name="Satou M."/>
            <person name="Tamse R."/>
            <person name="Vaysberg M."/>
            <person name="Wallender E.K."/>
            <person name="Wong C."/>
            <person name="Yamamura Y."/>
            <person name="Yuan S."/>
            <person name="Shinozaki K."/>
            <person name="Davis R.W."/>
            <person name="Theologis A."/>
            <person name="Ecker J.R."/>
        </authorList>
    </citation>
    <scope>NUCLEOTIDE SEQUENCE [LARGE SCALE MRNA] OF 5-203</scope>
    <source>
        <strain>cv. Columbia</strain>
    </source>
</reference>
<reference key="5">
    <citation type="journal article" date="2007" name="J. Mol. Biol.">
        <title>A novel phosphatase family, structurally related to dual-specificity phosphatases, that displays unique amino acid sequence and substrate specificity.</title>
        <authorList>
            <person name="Roma-Mateo C."/>
            <person name="Rios P."/>
            <person name="Tabernero L."/>
            <person name="Attwood T.K."/>
            <person name="Pulido R."/>
        </authorList>
    </citation>
    <scope>FUNCTION</scope>
</reference>
<reference key="6">
    <citation type="journal article" date="2011" name="Mol. Genet. Genomics">
        <title>Phylogenetic and genetic linkage between novel atypical dual-specificity phosphatases from non-metazoan organisms.</title>
        <authorList>
            <person name="Roma-Mateo C."/>
            <person name="Sacristan-Reviriego A."/>
            <person name="Beresford N.J."/>
            <person name="Caparros-Martin J.A."/>
            <person name="Culianez-Macia F.A."/>
            <person name="Martin H."/>
            <person name="Molina M."/>
            <person name="Tabernero L."/>
            <person name="Pulido R."/>
        </authorList>
    </citation>
    <scope>FUNCTION</scope>
    <scope>TISSUE SPECIFICITY</scope>
</reference>
<reference key="7">
    <citation type="journal article" date="2014" name="PLoS ONE">
        <title>DUF581 is plant specific FCS-like zinc finger involved in protein-protein interaction.</title>
        <authorList>
            <person name="Jamsheer K M."/>
            <person name="Laxmi A."/>
        </authorList>
    </citation>
    <scope>INTERACTION WITH FLZ1</scope>
    <scope>SUBCELLULAR LOCATION</scope>
</reference>
<reference key="8">
    <citation type="journal article" date="2022" name="Biochemistry">
        <title>Arabidopsis PFA-DSP-Type Phosphohydrolases Target Specific Inositol Pyrophosphate Messengers.</title>
        <authorList>
            <person name="Gaugler P."/>
            <person name="Schneider R."/>
            <person name="Liu G."/>
            <person name="Qiu D."/>
            <person name="Weber J."/>
            <person name="Schmid J."/>
            <person name="Jork N."/>
            <person name="Haener M."/>
            <person name="Ritter K."/>
            <person name="Fernandez-Rebollo N."/>
            <person name="Giehl R.F.H."/>
            <person name="Trung M.N."/>
            <person name="Yadav R."/>
            <person name="Fiedler D."/>
            <person name="Gaugler V."/>
            <person name="Jessen H.J."/>
            <person name="Schaaf G."/>
            <person name="Laha D."/>
        </authorList>
    </citation>
    <scope>FUNCTION</scope>
    <scope>CATALYTIC ACTIVITY</scope>
</reference>
<organism>
    <name type="scientific">Arabidopsis thaliana</name>
    <name type="common">Mouse-ear cress</name>
    <dbReference type="NCBI Taxonomy" id="3702"/>
    <lineage>
        <taxon>Eukaryota</taxon>
        <taxon>Viridiplantae</taxon>
        <taxon>Streptophyta</taxon>
        <taxon>Embryophyta</taxon>
        <taxon>Tracheophyta</taxon>
        <taxon>Spermatophyta</taxon>
        <taxon>Magnoliopsida</taxon>
        <taxon>eudicotyledons</taxon>
        <taxon>Gunneridae</taxon>
        <taxon>Pentapetalae</taxon>
        <taxon>rosids</taxon>
        <taxon>malvids</taxon>
        <taxon>Brassicales</taxon>
        <taxon>Brassicaceae</taxon>
        <taxon>Camelineae</taxon>
        <taxon>Arabidopsis</taxon>
    </lineage>
</organism>
<comment type="function">
    <text evidence="4 5 7">Cleaves the beta-phosphate at the 5-position of soluble inositol pyrophosphates (PubMed:35640071). Has highest activity on 5-diphosphoinositol 1,2,3,4,6-pentakisphosphate (5-InsP(7)), 1,5-bis-diphosphoinositol 2,3,4,6-tetrakisphosphate (1,5-InsP(8)) and 3,5-InsP(8) (PubMed:35640071). Possesses phosphotyrosine phosphatase activity in vitro (PubMed:21409566). Dephosphorylates the phosphoinositides PI(3,5)P2 (PubMed:21409566). Hydrolyzes para-nitrophenyl phosphate and O-methylfluorescein phosphate in vitro (PubMed:17976645, PubMed:21409566).</text>
</comment>
<comment type="catalytic activity">
    <reaction evidence="7">
        <text>5-diphospho-1D-myo-inositol 1,2,3,4,6-pentakisphosphate + H2O = 1D-myo-inositol hexakisphosphate + phosphate + H(+)</text>
        <dbReference type="Rhea" id="RHEA:22384"/>
        <dbReference type="ChEBI" id="CHEBI:15377"/>
        <dbReference type="ChEBI" id="CHEBI:15378"/>
        <dbReference type="ChEBI" id="CHEBI:43474"/>
        <dbReference type="ChEBI" id="CHEBI:58130"/>
        <dbReference type="ChEBI" id="CHEBI:58628"/>
        <dbReference type="EC" id="3.6.1.52"/>
    </reaction>
    <physiologicalReaction direction="left-to-right" evidence="7">
        <dbReference type="Rhea" id="RHEA:22385"/>
    </physiologicalReaction>
</comment>
<comment type="catalytic activity">
    <reaction evidence="7">
        <text>1,5-bis(diphospho)-1D-myo-inositol 2,3,4,6-tetrakisphosphate + H2O = 1-diphospho-1D-myo-inositol 2,3,4,5,6-pentakisphosphate + phosphate + 2 H(+)</text>
        <dbReference type="Rhea" id="RHEA:79699"/>
        <dbReference type="ChEBI" id="CHEBI:15377"/>
        <dbReference type="ChEBI" id="CHEBI:15378"/>
        <dbReference type="ChEBI" id="CHEBI:43474"/>
        <dbReference type="ChEBI" id="CHEBI:74946"/>
        <dbReference type="ChEBI" id="CHEBI:77983"/>
        <dbReference type="EC" id="3.6.1.52"/>
    </reaction>
    <physiologicalReaction direction="left-to-right" evidence="7">
        <dbReference type="Rhea" id="RHEA:79700"/>
    </physiologicalReaction>
</comment>
<comment type="catalytic activity">
    <reaction evidence="7">
        <text>3,5-bis(diphospho)-1D-myo-inositol 1,2,4,6-tetrakisphosphate + H2O = 3-diphospho-1D-myo-inositol 1,2,4,5,6-pentakisphosphate + phosphate + 2 H(+)</text>
        <dbReference type="Rhea" id="RHEA:56312"/>
        <dbReference type="ChEBI" id="CHEBI:15377"/>
        <dbReference type="ChEBI" id="CHEBI:15378"/>
        <dbReference type="ChEBI" id="CHEBI:43474"/>
        <dbReference type="ChEBI" id="CHEBI:140372"/>
        <dbReference type="ChEBI" id="CHEBI:140374"/>
        <dbReference type="EC" id="3.6.1.52"/>
    </reaction>
    <physiologicalReaction direction="left-to-right" evidence="7">
        <dbReference type="Rhea" id="RHEA:56313"/>
    </physiologicalReaction>
</comment>
<comment type="catalytic activity">
    <reaction evidence="7">
        <text>6-diphospho-1D-myo-inositol pentakisphosphate + H2O = 1D-myo-inositol hexakisphosphate + phosphate + H(+)</text>
        <dbReference type="Rhea" id="RHEA:79703"/>
        <dbReference type="ChEBI" id="CHEBI:15377"/>
        <dbReference type="ChEBI" id="CHEBI:15378"/>
        <dbReference type="ChEBI" id="CHEBI:43474"/>
        <dbReference type="ChEBI" id="CHEBI:58130"/>
        <dbReference type="ChEBI" id="CHEBI:230534"/>
        <dbReference type="EC" id="3.6.1.52"/>
    </reaction>
    <physiologicalReaction direction="left-to-right" evidence="7">
        <dbReference type="Rhea" id="RHEA:79704"/>
    </physiologicalReaction>
</comment>
<comment type="subunit">
    <text evidence="6">Interacts with FLZ1.</text>
</comment>
<comment type="subcellular location">
    <subcellularLocation>
        <location evidence="6">Nucleus</location>
    </subcellularLocation>
</comment>
<comment type="tissue specificity">
    <text evidence="5">Highly expressed in roots, stems and flowers. Expressed at low levels in leaves and siliques.</text>
</comment>
<comment type="similarity">
    <text evidence="9">Belongs to the protein-tyrosine phosphatase family. Atypical dual-specificity phosphatase Siw14-like subfamily.</text>
</comment>
<comment type="caution">
    <text evidence="9">Was initially described as a protein tyrosine phosphatase and has phosphotyrosine phosphatase activity in vitro but is now thought to function as an inositol pyrophosphate phosphatase.</text>
</comment>
<comment type="sequence caution" evidence="9">
    <conflict type="erroneous initiation">
        <sequence resource="EMBL-CDS" id="AAF26980"/>
    </conflict>
    <text>Truncated N-terminus.</text>
</comment>
<keyword id="KW-0378">Hydrolase</keyword>
<keyword id="KW-0539">Nucleus</keyword>
<keyword id="KW-1185">Reference proteome</keyword>
<proteinExistence type="evidence at protein level"/>
<sequence length="203" mass="23510">MCLIMETDDHNGDVLAPPSNFSMVEDGIYRSGFPRPENFSFLKTLNLRSIIYLCPEPYPEENLKFLEANNIKLYQFGIEGKTDPPTPMPKDTVLDALKVLVDVRNHPILIHCKRGKHRTGCLVGCLRKVQSWCLSSVLEEYQKNAGLKWRQRDLNFIEAFDIVSLRQCLLSIMYQYHGYGFKRRRLAYEEENVKTPKPQAARV</sequence>